<protein>
    <recommendedName>
        <fullName evidence="7">CLAVATA3/ESR (CLE)-related protein 12</fullName>
    </recommendedName>
    <component>
        <recommendedName>
            <fullName evidence="7">CLE12p</fullName>
        </recommendedName>
    </component>
</protein>
<dbReference type="EMBL" id="AC011914">
    <property type="status" value="NOT_ANNOTATED_CDS"/>
    <property type="molecule type" value="Genomic_DNA"/>
</dbReference>
<dbReference type="EMBL" id="CP002684">
    <property type="protein sequence ID" value="AEE34840.1"/>
    <property type="molecule type" value="Genomic_DNA"/>
</dbReference>
<dbReference type="EMBL" id="BT024812">
    <property type="protein sequence ID" value="ABD60695.1"/>
    <property type="molecule type" value="mRNA"/>
</dbReference>
<dbReference type="EMBL" id="AY087115">
    <property type="protein sequence ID" value="AAM64673.1"/>
    <property type="status" value="ALT_INIT"/>
    <property type="molecule type" value="mRNA"/>
</dbReference>
<dbReference type="RefSeq" id="NP_564943.1">
    <property type="nucleotide sequence ID" value="NM_105553.3"/>
</dbReference>
<dbReference type="STRING" id="3702.Q29PU4"/>
<dbReference type="GlyCosmos" id="Q29PU4">
    <property type="glycosylation" value="1 site, No reported glycans"/>
</dbReference>
<dbReference type="iPTMnet" id="Q29PU4"/>
<dbReference type="PaxDb" id="3702-AT1G68795.1"/>
<dbReference type="ProteomicsDB" id="246537"/>
<dbReference type="EnsemblPlants" id="AT1G68795.1">
    <property type="protein sequence ID" value="AT1G68795.1"/>
    <property type="gene ID" value="AT1G68795"/>
</dbReference>
<dbReference type="GeneID" id="843211"/>
<dbReference type="Gramene" id="AT1G68795.1">
    <property type="protein sequence ID" value="AT1G68795.1"/>
    <property type="gene ID" value="AT1G68795"/>
</dbReference>
<dbReference type="KEGG" id="ath:AT1G68795"/>
<dbReference type="Araport" id="AT1G68795"/>
<dbReference type="TAIR" id="AT1G68795">
    <property type="gene designation" value="CLE12"/>
</dbReference>
<dbReference type="eggNOG" id="ENOG502S8TY">
    <property type="taxonomic scope" value="Eukaryota"/>
</dbReference>
<dbReference type="HOGENOM" id="CLU_145048_0_0_1"/>
<dbReference type="InParanoid" id="Q29PU4"/>
<dbReference type="OMA" id="FDFTPFH"/>
<dbReference type="OrthoDB" id="753861at2759"/>
<dbReference type="PhylomeDB" id="Q29PU4"/>
<dbReference type="PRO" id="PR:Q29PU4"/>
<dbReference type="Proteomes" id="UP000006548">
    <property type="component" value="Chromosome 1"/>
</dbReference>
<dbReference type="ExpressionAtlas" id="Q29PU4">
    <property type="expression patterns" value="baseline and differential"/>
</dbReference>
<dbReference type="GO" id="GO:0048046">
    <property type="term" value="C:apoplast"/>
    <property type="evidence" value="ECO:0000250"/>
    <property type="project" value="UniProtKB"/>
</dbReference>
<dbReference type="GO" id="GO:0033612">
    <property type="term" value="F:receptor serine/threonine kinase binding"/>
    <property type="evidence" value="ECO:0000250"/>
    <property type="project" value="UniProtKB"/>
</dbReference>
<dbReference type="GO" id="GO:0045168">
    <property type="term" value="P:cell-cell signaling involved in cell fate commitment"/>
    <property type="evidence" value="ECO:0000250"/>
    <property type="project" value="UniProtKB"/>
</dbReference>
<dbReference type="InterPro" id="IPR039618">
    <property type="entry name" value="CLE9-13"/>
</dbReference>
<dbReference type="PANTHER" id="PTHR34359">
    <property type="entry name" value="CLAVATA3/ESR (CLE)-RELATED PROTEIN 10"/>
    <property type="match status" value="1"/>
</dbReference>
<dbReference type="PANTHER" id="PTHR34359:SF28">
    <property type="entry name" value="CLAVATA3_ESR (CLE)-RELATED PROTEIN 12"/>
    <property type="match status" value="1"/>
</dbReference>
<proteinExistence type="evidence at transcript level"/>
<sequence length="118" mass="14044">MLRISSSSSMALKFSQILFIVLWLSLFFLLLHHLYSLNFRRLYSLNAVEPSLLKQHYRSYRLVSRKVLSDRFDFTPFHSRDNSRHNHRSGEQYDGDEIDPRYGVEKRRVPSGPNPLHH</sequence>
<keyword id="KW-0217">Developmental protein</keyword>
<keyword id="KW-0221">Differentiation</keyword>
<keyword id="KW-0325">Glycoprotein</keyword>
<keyword id="KW-0379">Hydroxylation</keyword>
<keyword id="KW-1185">Reference proteome</keyword>
<keyword id="KW-0964">Secreted</keyword>
<keyword id="KW-0732">Signal</keyword>
<name>CLE12_ARATH</name>
<organism>
    <name type="scientific">Arabidopsis thaliana</name>
    <name type="common">Mouse-ear cress</name>
    <dbReference type="NCBI Taxonomy" id="3702"/>
    <lineage>
        <taxon>Eukaryota</taxon>
        <taxon>Viridiplantae</taxon>
        <taxon>Streptophyta</taxon>
        <taxon>Embryophyta</taxon>
        <taxon>Tracheophyta</taxon>
        <taxon>Spermatophyta</taxon>
        <taxon>Magnoliopsida</taxon>
        <taxon>eudicotyledons</taxon>
        <taxon>Gunneridae</taxon>
        <taxon>Pentapetalae</taxon>
        <taxon>rosids</taxon>
        <taxon>malvids</taxon>
        <taxon>Brassicales</taxon>
        <taxon>Brassicaceae</taxon>
        <taxon>Camelineae</taxon>
        <taxon>Arabidopsis</taxon>
    </lineage>
</organism>
<comment type="function">
    <molecule>CLE12p</molecule>
    <text evidence="5 6">Extracellular signal peptide that regulates cell fate. Represses root apical meristem maintenance.</text>
</comment>
<comment type="subcellular location">
    <molecule>CLE12p</molecule>
    <subcellularLocation>
        <location evidence="1">Secreted</location>
        <location evidence="1">Extracellular space</location>
    </subcellularLocation>
</comment>
<comment type="tissue specificity">
    <molecule>CLE12p</molecule>
    <text evidence="4">Mostly expressed in seedlings, roots, flowers, stems and apex, and, to a lower extent, in leaves and siliques.</text>
</comment>
<comment type="PTM">
    <molecule>CLE12p</molecule>
    <text evidence="1">The O-glycosylation (arabinosylation) of the hydroxyproline Pro-113 enhances binding affinity of the CLE12p peptide for its receptor.</text>
</comment>
<comment type="similarity">
    <text evidence="8">Belongs to the CLV3/ESR signal peptide family.</text>
</comment>
<comment type="sequence caution" evidence="8">
    <conflict type="erroneous initiation">
        <sequence resource="EMBL-CDS" id="AAM64673"/>
    </conflict>
    <text>Truncated N-terminus.</text>
</comment>
<feature type="signal peptide" evidence="2">
    <location>
        <begin position="1"/>
        <end position="35"/>
    </location>
</feature>
<feature type="chain" id="PRO_0000401255" description="CLAVATA3/ESR (CLE)-related protein 12">
    <location>
        <begin position="36"/>
        <end position="118"/>
    </location>
</feature>
<feature type="peptide" id="PRO_0000401256" description="CLE12p" evidence="1">
    <location>
        <begin position="107"/>
        <end position="118"/>
    </location>
</feature>
<feature type="region of interest" description="Disordered" evidence="3">
    <location>
        <begin position="75"/>
        <end position="118"/>
    </location>
</feature>
<feature type="compositionally biased region" description="Basic and acidic residues" evidence="3">
    <location>
        <begin position="75"/>
        <end position="91"/>
    </location>
</feature>
<feature type="compositionally biased region" description="Basic and acidic residues" evidence="3">
    <location>
        <begin position="98"/>
        <end position="108"/>
    </location>
</feature>
<feature type="modified residue" description="Hydroxyproline" evidence="1">
    <location>
        <position position="110"/>
    </location>
</feature>
<feature type="modified residue" description="Hydroxyproline" evidence="1">
    <location>
        <position position="113"/>
    </location>
</feature>
<feature type="glycosylation site" description="O-linked (Ara...) hydroxyproline" evidence="1">
    <location>
        <position position="113"/>
    </location>
</feature>
<gene>
    <name evidence="7" type="primary">CLE12</name>
    <name evidence="9" type="ordered locus">At1g68795</name>
    <name evidence="10" type="ORF">F14K14</name>
</gene>
<evidence type="ECO:0000250" key="1">
    <source>
        <dbReference type="UniProtKB" id="O49519"/>
    </source>
</evidence>
<evidence type="ECO:0000255" key="2"/>
<evidence type="ECO:0000256" key="3">
    <source>
        <dbReference type="SAM" id="MobiDB-lite"/>
    </source>
</evidence>
<evidence type="ECO:0000269" key="4">
    <source>
    </source>
</evidence>
<evidence type="ECO:0000269" key="5">
    <source>
    </source>
</evidence>
<evidence type="ECO:0000269" key="6">
    <source>
    </source>
</evidence>
<evidence type="ECO:0000303" key="7">
    <source>
    </source>
</evidence>
<evidence type="ECO:0000305" key="8"/>
<evidence type="ECO:0000312" key="9">
    <source>
        <dbReference type="Araport" id="AT1G68795"/>
    </source>
</evidence>
<evidence type="ECO:0000312" key="10">
    <source>
        <dbReference type="EMBL" id="AC011914"/>
    </source>
</evidence>
<accession>Q29PU4</accession>
<accession>Q8LBM7</accession>
<reference key="1">
    <citation type="journal article" date="2000" name="Nature">
        <title>Sequence and analysis of chromosome 1 of the plant Arabidopsis thaliana.</title>
        <authorList>
            <person name="Theologis A."/>
            <person name="Ecker J.R."/>
            <person name="Palm C.J."/>
            <person name="Federspiel N.A."/>
            <person name="Kaul S."/>
            <person name="White O."/>
            <person name="Alonso J."/>
            <person name="Altafi H."/>
            <person name="Araujo R."/>
            <person name="Bowman C.L."/>
            <person name="Brooks S.Y."/>
            <person name="Buehler E."/>
            <person name="Chan A."/>
            <person name="Chao Q."/>
            <person name="Chen H."/>
            <person name="Cheuk R.F."/>
            <person name="Chin C.W."/>
            <person name="Chung M.K."/>
            <person name="Conn L."/>
            <person name="Conway A.B."/>
            <person name="Conway A.R."/>
            <person name="Creasy T.H."/>
            <person name="Dewar K."/>
            <person name="Dunn P."/>
            <person name="Etgu P."/>
            <person name="Feldblyum T.V."/>
            <person name="Feng J.-D."/>
            <person name="Fong B."/>
            <person name="Fujii C.Y."/>
            <person name="Gill J.E."/>
            <person name="Goldsmith A.D."/>
            <person name="Haas B."/>
            <person name="Hansen N.F."/>
            <person name="Hughes B."/>
            <person name="Huizar L."/>
            <person name="Hunter J.L."/>
            <person name="Jenkins J."/>
            <person name="Johnson-Hopson C."/>
            <person name="Khan S."/>
            <person name="Khaykin E."/>
            <person name="Kim C.J."/>
            <person name="Koo H.L."/>
            <person name="Kremenetskaia I."/>
            <person name="Kurtz D.B."/>
            <person name="Kwan A."/>
            <person name="Lam B."/>
            <person name="Langin-Hooper S."/>
            <person name="Lee A."/>
            <person name="Lee J.M."/>
            <person name="Lenz C.A."/>
            <person name="Li J.H."/>
            <person name="Li Y.-P."/>
            <person name="Lin X."/>
            <person name="Liu S.X."/>
            <person name="Liu Z.A."/>
            <person name="Luros J.S."/>
            <person name="Maiti R."/>
            <person name="Marziali A."/>
            <person name="Militscher J."/>
            <person name="Miranda M."/>
            <person name="Nguyen M."/>
            <person name="Nierman W.C."/>
            <person name="Osborne B.I."/>
            <person name="Pai G."/>
            <person name="Peterson J."/>
            <person name="Pham P.K."/>
            <person name="Rizzo M."/>
            <person name="Rooney T."/>
            <person name="Rowley D."/>
            <person name="Sakano H."/>
            <person name="Salzberg S.L."/>
            <person name="Schwartz J.R."/>
            <person name="Shinn P."/>
            <person name="Southwick A.M."/>
            <person name="Sun H."/>
            <person name="Tallon L.J."/>
            <person name="Tambunga G."/>
            <person name="Toriumi M.J."/>
            <person name="Town C.D."/>
            <person name="Utterback T."/>
            <person name="Van Aken S."/>
            <person name="Vaysberg M."/>
            <person name="Vysotskaia V.S."/>
            <person name="Walker M."/>
            <person name="Wu D."/>
            <person name="Yu G."/>
            <person name="Fraser C.M."/>
            <person name="Venter J.C."/>
            <person name="Davis R.W."/>
        </authorList>
    </citation>
    <scope>NUCLEOTIDE SEQUENCE [LARGE SCALE GENOMIC DNA]</scope>
    <source>
        <strain>cv. Columbia</strain>
    </source>
</reference>
<reference key="2">
    <citation type="journal article" date="2017" name="Plant J.">
        <title>Araport11: a complete reannotation of the Arabidopsis thaliana reference genome.</title>
        <authorList>
            <person name="Cheng C.Y."/>
            <person name="Krishnakumar V."/>
            <person name="Chan A.P."/>
            <person name="Thibaud-Nissen F."/>
            <person name="Schobel S."/>
            <person name="Town C.D."/>
        </authorList>
    </citation>
    <scope>GENOME REANNOTATION</scope>
    <source>
        <strain>cv. Columbia</strain>
    </source>
</reference>
<reference key="3">
    <citation type="submission" date="2006-03" db="EMBL/GenBank/DDBJ databases">
        <title>Arabidopsis ORF clones.</title>
        <authorList>
            <person name="Kim C.J."/>
            <person name="Chen H."/>
            <person name="Shinn P."/>
            <person name="Ecker J.R."/>
        </authorList>
    </citation>
    <scope>NUCLEOTIDE SEQUENCE [LARGE SCALE MRNA]</scope>
    <source>
        <strain>cv. Columbia</strain>
    </source>
</reference>
<reference key="4">
    <citation type="submission" date="2002-03" db="EMBL/GenBank/DDBJ databases">
        <title>Full-length cDNA from Arabidopsis thaliana.</title>
        <authorList>
            <person name="Brover V.V."/>
            <person name="Troukhan M.E."/>
            <person name="Alexandrov N.A."/>
            <person name="Lu Y.-P."/>
            <person name="Flavell R.B."/>
            <person name="Feldmann K.A."/>
        </authorList>
    </citation>
    <scope>NUCLEOTIDE SEQUENCE [LARGE SCALE MRNA]</scope>
</reference>
<reference key="5">
    <citation type="journal article" date="2001" name="Plant Physiol.">
        <title>A large family of genes that share homology with CLAVATA3.</title>
        <authorList>
            <person name="Cock J.M."/>
            <person name="McCormick S."/>
        </authorList>
    </citation>
    <scope>GENE FAMILY</scope>
    <scope>NOMENCLATURE</scope>
</reference>
<reference key="6">
    <citation type="journal article" date="2003" name="Plant Mol. Biol.">
        <title>The Arabidopsis CLV3-like (CLE) genes are expressed in diverse tissues and encode secreted proteins.</title>
        <authorList>
            <person name="Sharma V.K."/>
            <person name="Ramirez J."/>
            <person name="Fletcher J.C."/>
        </authorList>
    </citation>
    <scope>TISSUE SPECIFICITY</scope>
</reference>
<reference key="7">
    <citation type="journal article" date="2006" name="Plant Physiol.">
        <title>Evidence for functional conservation, sufficiency, and proteolytic processing of the CLAVATA3 CLE domain.</title>
        <authorList>
            <person name="Ni J."/>
            <person name="Clark S.E."/>
        </authorList>
    </citation>
    <scope>FUNCTION</scope>
</reference>
<reference key="8">
    <citation type="journal article" date="2006" name="Plant Physiol.">
        <title>Gain-of-function phenotypes of many CLAVATA3/ESR genes, including four new family members, correlate with tandem variations in the conserved CLAVATA3/ESR domain.</title>
        <authorList>
            <person name="Strabala T.J."/>
            <person name="O'donnell P.J."/>
            <person name="Smit A.-M."/>
            <person name="Ampomah-Dwamena C."/>
            <person name="Martin E.J."/>
            <person name="Netzler N."/>
            <person name="Nieuwenhuizen N.J."/>
            <person name="Quinn B.D."/>
            <person name="Foote H.C.C."/>
            <person name="Hudson K.R."/>
        </authorList>
    </citation>
    <scope>GENE FAMILY</scope>
</reference>
<reference key="9">
    <citation type="journal article" date="2006" name="Science">
        <title>Dodeca-CLE peptides as suppressors of plant stem cell differentiation.</title>
        <authorList>
            <person name="Ito Y."/>
            <person name="Nakanomyo I."/>
            <person name="Motose H."/>
            <person name="Iwamoto K."/>
            <person name="Sawa S."/>
            <person name="Dohmae N."/>
            <person name="Fukuda H."/>
        </authorList>
    </citation>
    <scope>FUNCTION</scope>
</reference>
<reference key="10">
    <citation type="journal article" date="2008" name="Cell. Mol. Life Sci.">
        <title>The CLE family of plant polypeptide signaling molecules.</title>
        <authorList>
            <person name="Jun J.H."/>
            <person name="Fiume E."/>
            <person name="Fletcher J.C."/>
        </authorList>
    </citation>
    <scope>REVIEW</scope>
</reference>
<reference key="11">
    <citation type="journal article" date="2008" name="Curr. Opin. Plant Biol.">
        <title>Diverse and conserved roles of CLE peptides.</title>
        <authorList>
            <person name="Mitchum M.G."/>
            <person name="Wang X."/>
            <person name="Davis E.L."/>
        </authorList>
    </citation>
    <scope>REVIEW</scope>
</reference>
<reference key="12">
    <citation type="journal article" date="2010" name="Protoplasma">
        <title>CLE peptide signaling during plant development.</title>
        <authorList>
            <person name="Wang G."/>
            <person name="Fiers M."/>
        </authorList>
    </citation>
    <scope>REVIEW</scope>
</reference>